<keyword id="KW-0028">Amino-acid biosynthesis</keyword>
<keyword id="KW-0067">ATP-binding</keyword>
<keyword id="KW-0963">Cytoplasm</keyword>
<keyword id="KW-0418">Kinase</keyword>
<keyword id="KW-0547">Nucleotide-binding</keyword>
<keyword id="KW-0791">Threonine biosynthesis</keyword>
<keyword id="KW-0808">Transferase</keyword>
<dbReference type="EC" id="2.7.1.39" evidence="1"/>
<dbReference type="EMBL" id="CP000036">
    <property type="protein sequence ID" value="ABB64739.1"/>
    <property type="molecule type" value="Genomic_DNA"/>
</dbReference>
<dbReference type="RefSeq" id="WP_000241660.1">
    <property type="nucleotide sequence ID" value="NC_007613.1"/>
</dbReference>
<dbReference type="SMR" id="Q326L9"/>
<dbReference type="GeneID" id="75202912"/>
<dbReference type="KEGG" id="sbo:SBO_0002"/>
<dbReference type="HOGENOM" id="CLU_041243_1_1_6"/>
<dbReference type="UniPathway" id="UPA00050">
    <property type="reaction ID" value="UER00064"/>
</dbReference>
<dbReference type="Proteomes" id="UP000007067">
    <property type="component" value="Chromosome"/>
</dbReference>
<dbReference type="GO" id="GO:0005737">
    <property type="term" value="C:cytoplasm"/>
    <property type="evidence" value="ECO:0007669"/>
    <property type="project" value="UniProtKB-SubCell"/>
</dbReference>
<dbReference type="GO" id="GO:0005524">
    <property type="term" value="F:ATP binding"/>
    <property type="evidence" value="ECO:0007669"/>
    <property type="project" value="UniProtKB-UniRule"/>
</dbReference>
<dbReference type="GO" id="GO:0004413">
    <property type="term" value="F:homoserine kinase activity"/>
    <property type="evidence" value="ECO:0007669"/>
    <property type="project" value="UniProtKB-UniRule"/>
</dbReference>
<dbReference type="GO" id="GO:0009088">
    <property type="term" value="P:threonine biosynthetic process"/>
    <property type="evidence" value="ECO:0007669"/>
    <property type="project" value="UniProtKB-UniRule"/>
</dbReference>
<dbReference type="FunFam" id="3.30.230.10:FF:000020">
    <property type="entry name" value="Homoserine kinase"/>
    <property type="match status" value="1"/>
</dbReference>
<dbReference type="FunFam" id="3.30.70.890:FF:000002">
    <property type="entry name" value="Homoserine kinase"/>
    <property type="match status" value="1"/>
</dbReference>
<dbReference type="Gene3D" id="3.30.230.10">
    <property type="match status" value="1"/>
</dbReference>
<dbReference type="Gene3D" id="3.30.70.890">
    <property type="entry name" value="GHMP kinase, C-terminal domain"/>
    <property type="match status" value="1"/>
</dbReference>
<dbReference type="HAMAP" id="MF_00384">
    <property type="entry name" value="Homoser_kinase"/>
    <property type="match status" value="1"/>
</dbReference>
<dbReference type="InterPro" id="IPR013750">
    <property type="entry name" value="GHMP_kinase_C_dom"/>
</dbReference>
<dbReference type="InterPro" id="IPR036554">
    <property type="entry name" value="GHMP_kinase_C_sf"/>
</dbReference>
<dbReference type="InterPro" id="IPR006204">
    <property type="entry name" value="GHMP_kinase_N_dom"/>
</dbReference>
<dbReference type="InterPro" id="IPR006203">
    <property type="entry name" value="GHMP_knse_ATP-bd_CS"/>
</dbReference>
<dbReference type="InterPro" id="IPR000870">
    <property type="entry name" value="Homoserine_kinase"/>
</dbReference>
<dbReference type="InterPro" id="IPR020568">
    <property type="entry name" value="Ribosomal_Su5_D2-typ_SF"/>
</dbReference>
<dbReference type="InterPro" id="IPR014721">
    <property type="entry name" value="Ribsml_uS5_D2-typ_fold_subgr"/>
</dbReference>
<dbReference type="NCBIfam" id="NF002288">
    <property type="entry name" value="PRK01212.1-4"/>
    <property type="match status" value="1"/>
</dbReference>
<dbReference type="NCBIfam" id="TIGR00191">
    <property type="entry name" value="thrB"/>
    <property type="match status" value="1"/>
</dbReference>
<dbReference type="PANTHER" id="PTHR20861:SF1">
    <property type="entry name" value="HOMOSERINE KINASE"/>
    <property type="match status" value="1"/>
</dbReference>
<dbReference type="PANTHER" id="PTHR20861">
    <property type="entry name" value="HOMOSERINE/4-DIPHOSPHOCYTIDYL-2-C-METHYL-D-ERYTHRITOL KINASE"/>
    <property type="match status" value="1"/>
</dbReference>
<dbReference type="Pfam" id="PF08544">
    <property type="entry name" value="GHMP_kinases_C"/>
    <property type="match status" value="1"/>
</dbReference>
<dbReference type="Pfam" id="PF00288">
    <property type="entry name" value="GHMP_kinases_N"/>
    <property type="match status" value="1"/>
</dbReference>
<dbReference type="PIRSF" id="PIRSF000676">
    <property type="entry name" value="Homoser_kin"/>
    <property type="match status" value="1"/>
</dbReference>
<dbReference type="PRINTS" id="PR00958">
    <property type="entry name" value="HOMSERKINASE"/>
</dbReference>
<dbReference type="SUPFAM" id="SSF55060">
    <property type="entry name" value="GHMP Kinase, C-terminal domain"/>
    <property type="match status" value="1"/>
</dbReference>
<dbReference type="SUPFAM" id="SSF54211">
    <property type="entry name" value="Ribosomal protein S5 domain 2-like"/>
    <property type="match status" value="1"/>
</dbReference>
<dbReference type="PROSITE" id="PS00627">
    <property type="entry name" value="GHMP_KINASES_ATP"/>
    <property type="match status" value="1"/>
</dbReference>
<gene>
    <name evidence="1" type="primary">thrB</name>
    <name type="ordered locus">SBO_0002</name>
</gene>
<reference key="1">
    <citation type="journal article" date="2005" name="Nucleic Acids Res.">
        <title>Genome dynamics and diversity of Shigella species, the etiologic agents of bacillary dysentery.</title>
        <authorList>
            <person name="Yang F."/>
            <person name="Yang J."/>
            <person name="Zhang X."/>
            <person name="Chen L."/>
            <person name="Jiang Y."/>
            <person name="Yan Y."/>
            <person name="Tang X."/>
            <person name="Wang J."/>
            <person name="Xiong Z."/>
            <person name="Dong J."/>
            <person name="Xue Y."/>
            <person name="Zhu Y."/>
            <person name="Xu X."/>
            <person name="Sun L."/>
            <person name="Chen S."/>
            <person name="Nie H."/>
            <person name="Peng J."/>
            <person name="Xu J."/>
            <person name="Wang Y."/>
            <person name="Yuan Z."/>
            <person name="Wen Y."/>
            <person name="Yao Z."/>
            <person name="Shen Y."/>
            <person name="Qiang B."/>
            <person name="Hou Y."/>
            <person name="Yu J."/>
            <person name="Jin Q."/>
        </authorList>
    </citation>
    <scope>NUCLEOTIDE SEQUENCE [LARGE SCALE GENOMIC DNA]</scope>
    <source>
        <strain>Sb227</strain>
    </source>
</reference>
<accession>Q326L9</accession>
<sequence>MVKVYAPASSANMSVGFDVLGAAVTPVDGALLGDVVTVEAAETFSLNNLGRFADKLPSEPRENIVYQCWERFCQELGKQIPVAMTLEKNMPIGSGLGSSACSVVAALMAMNEHCGKPLNDTRLLALMGELEGRISGSIHYDNVAPCFLGGMQLMIEENDIISQQVPGFDEWLWVLAYPGIKVSTAEARAILPAQYRRQDCIAHGRHLAGFIHACYSRQPELAAKLMKDVIAEPYRERLLPGFRQARQAVAEIGAVASGISGSGPTLFALCDKPDTAQRVADWLGKNYLQNQEGFVHICRLDTAGARVLEN</sequence>
<comment type="function">
    <text evidence="1">Catalyzes the ATP-dependent phosphorylation of L-homoserine to L-homoserine phosphate.</text>
</comment>
<comment type="catalytic activity">
    <reaction evidence="1">
        <text>L-homoserine + ATP = O-phospho-L-homoserine + ADP + H(+)</text>
        <dbReference type="Rhea" id="RHEA:13985"/>
        <dbReference type="ChEBI" id="CHEBI:15378"/>
        <dbReference type="ChEBI" id="CHEBI:30616"/>
        <dbReference type="ChEBI" id="CHEBI:57476"/>
        <dbReference type="ChEBI" id="CHEBI:57590"/>
        <dbReference type="ChEBI" id="CHEBI:456216"/>
        <dbReference type="EC" id="2.7.1.39"/>
    </reaction>
</comment>
<comment type="pathway">
    <text evidence="1">Amino-acid biosynthesis; L-threonine biosynthesis; L-threonine from L-aspartate: step 4/5.</text>
</comment>
<comment type="subcellular location">
    <subcellularLocation>
        <location evidence="1">Cytoplasm</location>
    </subcellularLocation>
</comment>
<comment type="similarity">
    <text evidence="1">Belongs to the GHMP kinase family. Homoserine kinase subfamily.</text>
</comment>
<proteinExistence type="inferred from homology"/>
<protein>
    <recommendedName>
        <fullName evidence="1">Homoserine kinase</fullName>
        <shortName evidence="1">HK</shortName>
        <shortName evidence="1">HSK</shortName>
        <ecNumber evidence="1">2.7.1.39</ecNumber>
    </recommendedName>
</protein>
<name>KHSE_SHIBS</name>
<evidence type="ECO:0000255" key="1">
    <source>
        <dbReference type="HAMAP-Rule" id="MF_00384"/>
    </source>
</evidence>
<feature type="chain" id="PRO_1000049163" description="Homoserine kinase">
    <location>
        <begin position="1"/>
        <end position="310"/>
    </location>
</feature>
<feature type="binding site" evidence="1">
    <location>
        <begin position="91"/>
        <end position="101"/>
    </location>
    <ligand>
        <name>ATP</name>
        <dbReference type="ChEBI" id="CHEBI:30616"/>
    </ligand>
</feature>
<organism>
    <name type="scientific">Shigella boydii serotype 4 (strain Sb227)</name>
    <dbReference type="NCBI Taxonomy" id="300268"/>
    <lineage>
        <taxon>Bacteria</taxon>
        <taxon>Pseudomonadati</taxon>
        <taxon>Pseudomonadota</taxon>
        <taxon>Gammaproteobacteria</taxon>
        <taxon>Enterobacterales</taxon>
        <taxon>Enterobacteriaceae</taxon>
        <taxon>Shigella</taxon>
    </lineage>
</organism>